<evidence type="ECO:0000250" key="1"/>
<evidence type="ECO:0000250" key="2">
    <source>
        <dbReference type="UniProtKB" id="P17812"/>
    </source>
</evidence>
<evidence type="ECO:0000269" key="3">
    <source>
    </source>
</evidence>
<evidence type="ECO:0000305" key="4"/>
<reference key="1">
    <citation type="submission" date="2003-09" db="EMBL/GenBank/DDBJ databases">
        <authorList>
            <consortium name="NIH - Zebrafish Gene Collection (ZGC) project"/>
        </authorList>
    </citation>
    <scope>NUCLEOTIDE SEQUENCE [LARGE SCALE MRNA]</scope>
    <source>
        <tissue>Kidney</tissue>
    </source>
</reference>
<reference key="2">
    <citation type="journal article" date="2008" name="J. Proteome Res.">
        <title>Online automated in vivo zebrafish phosphoproteomics: from large-scale analysis down to a single embryo.</title>
        <authorList>
            <person name="Lemeer S."/>
            <person name="Pinkse M.W.H."/>
            <person name="Mohammed S."/>
            <person name="van Breukelen B."/>
            <person name="den Hertog J."/>
            <person name="Slijper M."/>
            <person name="Heck A.J.R."/>
        </authorList>
    </citation>
    <scope>PHOSPHORYLATION [LARGE SCALE ANALYSIS] AT SER-571 AND SER-575</scope>
    <scope>IDENTIFICATION BY MASS SPECTROMETRY</scope>
    <source>
        <tissue>Embryo</tissue>
    </source>
</reference>
<organism>
    <name type="scientific">Danio rerio</name>
    <name type="common">Zebrafish</name>
    <name type="synonym">Brachydanio rerio</name>
    <dbReference type="NCBI Taxonomy" id="7955"/>
    <lineage>
        <taxon>Eukaryota</taxon>
        <taxon>Metazoa</taxon>
        <taxon>Chordata</taxon>
        <taxon>Craniata</taxon>
        <taxon>Vertebrata</taxon>
        <taxon>Euteleostomi</taxon>
        <taxon>Actinopterygii</taxon>
        <taxon>Neopterygii</taxon>
        <taxon>Teleostei</taxon>
        <taxon>Ostariophysi</taxon>
        <taxon>Cypriniformes</taxon>
        <taxon>Danionidae</taxon>
        <taxon>Danioninae</taxon>
        <taxon>Danio</taxon>
    </lineage>
</organism>
<name>PYRG1_DANRE</name>
<dbReference type="EC" id="6.3.4.2" evidence="2"/>
<dbReference type="EMBL" id="BC058048">
    <property type="protein sequence ID" value="AAH58048.1"/>
    <property type="molecule type" value="mRNA"/>
</dbReference>
<dbReference type="SMR" id="Q6PEI7"/>
<dbReference type="FunCoup" id="Q6PEI7">
    <property type="interactions" value="807"/>
</dbReference>
<dbReference type="STRING" id="7955.ENSDARP00000121703"/>
<dbReference type="iPTMnet" id="Q6PEI7"/>
<dbReference type="PaxDb" id="7955-ENSDARP00000105255"/>
<dbReference type="AGR" id="ZFIN:ZDB-GENE-030131-808"/>
<dbReference type="ZFIN" id="ZDB-GENE-030131-808">
    <property type="gene designation" value="ctps1a"/>
</dbReference>
<dbReference type="eggNOG" id="KOG2387">
    <property type="taxonomic scope" value="Eukaryota"/>
</dbReference>
<dbReference type="InParanoid" id="Q6PEI7"/>
<dbReference type="OrthoDB" id="1739076at2759"/>
<dbReference type="PhylomeDB" id="Q6PEI7"/>
<dbReference type="Reactome" id="R-DRE-499943">
    <property type="pathway name" value="Interconversion of nucleotide di- and triphosphates"/>
</dbReference>
<dbReference type="UniPathway" id="UPA00159">
    <property type="reaction ID" value="UER00277"/>
</dbReference>
<dbReference type="PRO" id="PR:Q6PEI7"/>
<dbReference type="Proteomes" id="UP000000437">
    <property type="component" value="Unplaced"/>
</dbReference>
<dbReference type="GO" id="GO:0097268">
    <property type="term" value="C:cytoophidium"/>
    <property type="evidence" value="ECO:0000318"/>
    <property type="project" value="GO_Central"/>
</dbReference>
<dbReference type="GO" id="GO:0005737">
    <property type="term" value="C:cytoplasm"/>
    <property type="evidence" value="ECO:0000318"/>
    <property type="project" value="GO_Central"/>
</dbReference>
<dbReference type="GO" id="GO:0005524">
    <property type="term" value="F:ATP binding"/>
    <property type="evidence" value="ECO:0007669"/>
    <property type="project" value="UniProtKB-KW"/>
</dbReference>
<dbReference type="GO" id="GO:0003883">
    <property type="term" value="F:CTP synthase activity"/>
    <property type="evidence" value="ECO:0000250"/>
    <property type="project" value="UniProtKB"/>
</dbReference>
<dbReference type="GO" id="GO:0042802">
    <property type="term" value="F:identical protein binding"/>
    <property type="evidence" value="ECO:0000318"/>
    <property type="project" value="GO_Central"/>
</dbReference>
<dbReference type="GO" id="GO:0044210">
    <property type="term" value="P:'de novo' CTP biosynthetic process"/>
    <property type="evidence" value="ECO:0007669"/>
    <property type="project" value="UniProtKB-UniPathway"/>
</dbReference>
<dbReference type="GO" id="GO:0006241">
    <property type="term" value="P:CTP biosynthetic process"/>
    <property type="evidence" value="ECO:0000250"/>
    <property type="project" value="UniProtKB"/>
</dbReference>
<dbReference type="GO" id="GO:0030903">
    <property type="term" value="P:notochord development"/>
    <property type="evidence" value="ECO:0000315"/>
    <property type="project" value="ZFIN"/>
</dbReference>
<dbReference type="GO" id="GO:0019856">
    <property type="term" value="P:pyrimidine nucleobase biosynthetic process"/>
    <property type="evidence" value="ECO:0000318"/>
    <property type="project" value="GO_Central"/>
</dbReference>
<dbReference type="CDD" id="cd03113">
    <property type="entry name" value="CTPS_N"/>
    <property type="match status" value="1"/>
</dbReference>
<dbReference type="CDD" id="cd01746">
    <property type="entry name" value="GATase1_CTP_Synthase"/>
    <property type="match status" value="1"/>
</dbReference>
<dbReference type="FunFam" id="3.40.50.300:FF:000207">
    <property type="entry name" value="CTP synthase"/>
    <property type="match status" value="1"/>
</dbReference>
<dbReference type="FunFam" id="3.40.50.880:FF:000005">
    <property type="entry name" value="CTP synthase"/>
    <property type="match status" value="1"/>
</dbReference>
<dbReference type="Gene3D" id="3.40.50.880">
    <property type="match status" value="1"/>
</dbReference>
<dbReference type="Gene3D" id="3.40.50.300">
    <property type="entry name" value="P-loop containing nucleotide triphosphate hydrolases"/>
    <property type="match status" value="1"/>
</dbReference>
<dbReference type="HAMAP" id="MF_01227">
    <property type="entry name" value="PyrG"/>
    <property type="match status" value="1"/>
</dbReference>
<dbReference type="InterPro" id="IPR029062">
    <property type="entry name" value="Class_I_gatase-like"/>
</dbReference>
<dbReference type="InterPro" id="IPR004468">
    <property type="entry name" value="CTP_synthase"/>
</dbReference>
<dbReference type="InterPro" id="IPR017456">
    <property type="entry name" value="CTP_synthase_N"/>
</dbReference>
<dbReference type="InterPro" id="IPR017926">
    <property type="entry name" value="GATASE"/>
</dbReference>
<dbReference type="InterPro" id="IPR033828">
    <property type="entry name" value="GATase1_CTP_Synthase"/>
</dbReference>
<dbReference type="InterPro" id="IPR027417">
    <property type="entry name" value="P-loop_NTPase"/>
</dbReference>
<dbReference type="NCBIfam" id="NF003792">
    <property type="entry name" value="PRK05380.1"/>
    <property type="match status" value="1"/>
</dbReference>
<dbReference type="NCBIfam" id="TIGR00337">
    <property type="entry name" value="PyrG"/>
    <property type="match status" value="1"/>
</dbReference>
<dbReference type="PANTHER" id="PTHR11550">
    <property type="entry name" value="CTP SYNTHASE"/>
    <property type="match status" value="1"/>
</dbReference>
<dbReference type="PANTHER" id="PTHR11550:SF0">
    <property type="entry name" value="CTP SYNTHASE-RELATED"/>
    <property type="match status" value="1"/>
</dbReference>
<dbReference type="Pfam" id="PF06418">
    <property type="entry name" value="CTP_synth_N"/>
    <property type="match status" value="1"/>
</dbReference>
<dbReference type="Pfam" id="PF00117">
    <property type="entry name" value="GATase"/>
    <property type="match status" value="1"/>
</dbReference>
<dbReference type="SUPFAM" id="SSF52317">
    <property type="entry name" value="Class I glutamine amidotransferase-like"/>
    <property type="match status" value="1"/>
</dbReference>
<dbReference type="SUPFAM" id="SSF52540">
    <property type="entry name" value="P-loop containing nucleoside triphosphate hydrolases"/>
    <property type="match status" value="1"/>
</dbReference>
<dbReference type="PROSITE" id="PS51273">
    <property type="entry name" value="GATASE_TYPE_1"/>
    <property type="match status" value="1"/>
</dbReference>
<accession>Q6PEI7</accession>
<sequence>MKYILVTGGVISGIGKGIIASSVGTILKSCGLHVTAIKIDPYINIDAGTFSPYEHGEVFVLDDGGEVDLDLGNYERFLDIRLTKDNNLTTGKIYQSVINKERRGDYLGKTVQVVPHITDAIQEWVMRQAKIPVDDDDVEPQVCVIELGGTVGDIESMPFVEAFRQFQFKVKRENFCNIHVSLVPQPSATGEQKTKPTQNSVRELRGLGLSPDLIMCRCSTPLDNSVKEKISMFCHVEPEQVICVHDVSSIYRVPLLLEDQGVVGYFCRRLNLPIENRPRKMLAKWKEMSDRSDRLLEQCSIALVGKYTKFSDSYASVIKALEHSALAISHKLEVKYVDSADLEPSMLQEEPVKYHEAWQKLCSSDGILVPGGFGVRGTEGKIQAINWARKQKKPFLGVCLGMQLAVCEFARNMLDWTDANSTEFDPETKHPVVIDMPEHNPGQMGGTMRLGKRRTIFKNKSSILRKLYGDVDYVEERHRHRFEVNPELKHHFEEKGFRFVGQDVEGERMEVIEMDDHPYFVGVQYHPEFTSRPIKPSPPYLGLLLAAAGRLQSYLQKGCRLSPRDAYSDRSGSSSPDLEIADLKLRSIAQE</sequence>
<keyword id="KW-0067">ATP-binding</keyword>
<keyword id="KW-0315">Glutamine amidotransferase</keyword>
<keyword id="KW-0436">Ligase</keyword>
<keyword id="KW-0547">Nucleotide-binding</keyword>
<keyword id="KW-0597">Phosphoprotein</keyword>
<keyword id="KW-0665">Pyrimidine biosynthesis</keyword>
<keyword id="KW-1185">Reference proteome</keyword>
<protein>
    <recommendedName>
        <fullName evidence="4">CTP synthase 1</fullName>
        <ecNumber evidence="2">6.3.4.2</ecNumber>
    </recommendedName>
    <alternativeName>
        <fullName>CTP synthetase 1</fullName>
    </alternativeName>
    <alternativeName>
        <fullName>UTP--ammonia ligase 1</fullName>
    </alternativeName>
</protein>
<gene>
    <name type="primary">ctps1</name>
    <name type="synonym">ctps1a</name>
    <name type="synonym">ctpsa</name>
</gene>
<comment type="function">
    <text evidence="2">This enzyme is involved in the de novo synthesis of CTP, a precursor of DNA, RNA and phospholipids. Catalyzes the ATP-dependent amination of UTP to CTP with either L-glutamine or ammonia as a source of nitrogen.</text>
</comment>
<comment type="catalytic activity">
    <reaction evidence="2">
        <text>UTP + L-glutamine + ATP + H2O = CTP + L-glutamate + ADP + phosphate + 2 H(+)</text>
        <dbReference type="Rhea" id="RHEA:26426"/>
        <dbReference type="ChEBI" id="CHEBI:15377"/>
        <dbReference type="ChEBI" id="CHEBI:15378"/>
        <dbReference type="ChEBI" id="CHEBI:29985"/>
        <dbReference type="ChEBI" id="CHEBI:30616"/>
        <dbReference type="ChEBI" id="CHEBI:37563"/>
        <dbReference type="ChEBI" id="CHEBI:43474"/>
        <dbReference type="ChEBI" id="CHEBI:46398"/>
        <dbReference type="ChEBI" id="CHEBI:58359"/>
        <dbReference type="ChEBI" id="CHEBI:456216"/>
        <dbReference type="EC" id="6.3.4.2"/>
    </reaction>
</comment>
<comment type="pathway">
    <text evidence="2">Pyrimidine metabolism; CTP biosynthesis via de novo pathway; CTP from UDP: step 2/2.</text>
</comment>
<comment type="similarity">
    <text evidence="4">Belongs to the CTP synthase family.</text>
</comment>
<proteinExistence type="evidence at protein level"/>
<feature type="chain" id="PRO_0000247029" description="CTP synthase 1">
    <location>
        <begin position="1"/>
        <end position="591"/>
    </location>
</feature>
<feature type="domain" description="Glutamine amidotransferase type-1">
    <location>
        <begin position="300"/>
        <end position="554"/>
    </location>
</feature>
<feature type="active site" description="For GATase activity" evidence="1">
    <location>
        <position position="399"/>
    </location>
</feature>
<feature type="active site" description="For GATase activity" evidence="1">
    <location>
        <position position="526"/>
    </location>
</feature>
<feature type="active site" description="For GATase activity" evidence="1">
    <location>
        <position position="528"/>
    </location>
</feature>
<feature type="modified residue" description="Phosphoserine" evidence="3">
    <location>
        <position position="571"/>
    </location>
</feature>
<feature type="modified residue" description="Phosphoserine" evidence="3">
    <location>
        <position position="575"/>
    </location>
</feature>